<proteinExistence type="inferred from homology"/>
<gene>
    <name evidence="1" type="primary">rny</name>
    <name type="ordered locus">RoseRS_0330</name>
</gene>
<keyword id="KW-1003">Cell membrane</keyword>
<keyword id="KW-0255">Endonuclease</keyword>
<keyword id="KW-0378">Hydrolase</keyword>
<keyword id="KW-0472">Membrane</keyword>
<keyword id="KW-0540">Nuclease</keyword>
<keyword id="KW-0694">RNA-binding</keyword>
<keyword id="KW-0812">Transmembrane</keyword>
<keyword id="KW-1133">Transmembrane helix</keyword>
<name>RNY_ROSS1</name>
<sequence length="535" mass="60197">MFEPVATARHWAVACCTFTIEQEDVVQWLIWALPALVIGLAIGAGIGILIYKKSVQSQIRQIEAEARLQLEATRSEQKDLILRATDEALRLRAEAEAQIREARAALAKQEERLQRKEENLDRKIEGLERRERQLQQRERQMEQLHQEAEQLRQQQRAELERISALSQEEARAIILKRVEDETRDEAARRIREIEKNVREEADKLARKVISMAIQRCASEYVAEVTVSTVALPSEELKGRIIGREGRNIRAFEQLTGVDIIVDDTPEAVTLSCHDPVRREVARLALIKLLKDGRIHPTRIEEVVSKTQQEVEQIMREEGERVAYEANVQGLHPDLIKLLGRLKYRTSYGQNVLQHSLECALLAAHIAAEIGANINVAKTAALLHDIGKAVDHEVQGPHALIGAEIARRLGKSPAIVHAIAAHHNDEEPQTVEAWLVQAVDAISGGRPGARRETLDLYIKRLEALETVATSFTGVQRAFAVQAGREVRVMVQPDAIDDLGSIHLARDVAKKIEESLQYPGQIKVTVIRETRAVDYAR</sequence>
<dbReference type="EC" id="3.1.-.-" evidence="1"/>
<dbReference type="EMBL" id="CP000686">
    <property type="protein sequence ID" value="ABQ88762.1"/>
    <property type="molecule type" value="Genomic_DNA"/>
</dbReference>
<dbReference type="RefSeq" id="WP_011955119.1">
    <property type="nucleotide sequence ID" value="NC_009523.1"/>
</dbReference>
<dbReference type="SMR" id="A5UQ59"/>
<dbReference type="STRING" id="357808.RoseRS_0330"/>
<dbReference type="KEGG" id="rrs:RoseRS_0330"/>
<dbReference type="eggNOG" id="COG1418">
    <property type="taxonomic scope" value="Bacteria"/>
</dbReference>
<dbReference type="HOGENOM" id="CLU_028328_1_0_0"/>
<dbReference type="Proteomes" id="UP000006554">
    <property type="component" value="Chromosome"/>
</dbReference>
<dbReference type="GO" id="GO:0005886">
    <property type="term" value="C:plasma membrane"/>
    <property type="evidence" value="ECO:0007669"/>
    <property type="project" value="UniProtKB-SubCell"/>
</dbReference>
<dbReference type="GO" id="GO:0003723">
    <property type="term" value="F:RNA binding"/>
    <property type="evidence" value="ECO:0007669"/>
    <property type="project" value="UniProtKB-UniRule"/>
</dbReference>
<dbReference type="GO" id="GO:0004521">
    <property type="term" value="F:RNA endonuclease activity"/>
    <property type="evidence" value="ECO:0007669"/>
    <property type="project" value="UniProtKB-UniRule"/>
</dbReference>
<dbReference type="GO" id="GO:0006402">
    <property type="term" value="P:mRNA catabolic process"/>
    <property type="evidence" value="ECO:0007669"/>
    <property type="project" value="UniProtKB-UniRule"/>
</dbReference>
<dbReference type="CDD" id="cd00077">
    <property type="entry name" value="HDc"/>
    <property type="match status" value="1"/>
</dbReference>
<dbReference type="CDD" id="cd22431">
    <property type="entry name" value="KH-I_RNaseY"/>
    <property type="match status" value="1"/>
</dbReference>
<dbReference type="FunFam" id="1.10.3210.10:FF:000022">
    <property type="entry name" value="Ribonuclease Y"/>
    <property type="match status" value="1"/>
</dbReference>
<dbReference type="Gene3D" id="1.10.3210.10">
    <property type="entry name" value="Hypothetical protein af1432"/>
    <property type="match status" value="1"/>
</dbReference>
<dbReference type="Gene3D" id="3.30.1370.10">
    <property type="entry name" value="K Homology domain, type 1"/>
    <property type="match status" value="1"/>
</dbReference>
<dbReference type="HAMAP" id="MF_00335">
    <property type="entry name" value="RNase_Y"/>
    <property type="match status" value="1"/>
</dbReference>
<dbReference type="InterPro" id="IPR003607">
    <property type="entry name" value="HD/PDEase_dom"/>
</dbReference>
<dbReference type="InterPro" id="IPR006674">
    <property type="entry name" value="HD_domain"/>
</dbReference>
<dbReference type="InterPro" id="IPR006675">
    <property type="entry name" value="HDIG_dom"/>
</dbReference>
<dbReference type="InterPro" id="IPR004087">
    <property type="entry name" value="KH_dom"/>
</dbReference>
<dbReference type="InterPro" id="IPR004088">
    <property type="entry name" value="KH_dom_type_1"/>
</dbReference>
<dbReference type="InterPro" id="IPR036612">
    <property type="entry name" value="KH_dom_type_1_sf"/>
</dbReference>
<dbReference type="InterPro" id="IPR017705">
    <property type="entry name" value="Ribonuclease_Y"/>
</dbReference>
<dbReference type="InterPro" id="IPR022711">
    <property type="entry name" value="RNase_Y_N"/>
</dbReference>
<dbReference type="NCBIfam" id="TIGR00277">
    <property type="entry name" value="HDIG"/>
    <property type="match status" value="1"/>
</dbReference>
<dbReference type="NCBIfam" id="TIGR03319">
    <property type="entry name" value="RNase_Y"/>
    <property type="match status" value="1"/>
</dbReference>
<dbReference type="PANTHER" id="PTHR12826">
    <property type="entry name" value="RIBONUCLEASE Y"/>
    <property type="match status" value="1"/>
</dbReference>
<dbReference type="PANTHER" id="PTHR12826:SF15">
    <property type="entry name" value="RIBONUCLEASE Y"/>
    <property type="match status" value="1"/>
</dbReference>
<dbReference type="Pfam" id="PF01966">
    <property type="entry name" value="HD"/>
    <property type="match status" value="1"/>
</dbReference>
<dbReference type="Pfam" id="PF00013">
    <property type="entry name" value="KH_1"/>
    <property type="match status" value="1"/>
</dbReference>
<dbReference type="Pfam" id="PF12072">
    <property type="entry name" value="RNase_Y_N"/>
    <property type="match status" value="1"/>
</dbReference>
<dbReference type="SMART" id="SM00471">
    <property type="entry name" value="HDc"/>
    <property type="match status" value="1"/>
</dbReference>
<dbReference type="SMART" id="SM00322">
    <property type="entry name" value="KH"/>
    <property type="match status" value="1"/>
</dbReference>
<dbReference type="SUPFAM" id="SSF54791">
    <property type="entry name" value="Eukaryotic type KH-domain (KH-domain type I)"/>
    <property type="match status" value="1"/>
</dbReference>
<dbReference type="SUPFAM" id="SSF109604">
    <property type="entry name" value="HD-domain/PDEase-like"/>
    <property type="match status" value="1"/>
</dbReference>
<dbReference type="PROSITE" id="PS51831">
    <property type="entry name" value="HD"/>
    <property type="match status" value="1"/>
</dbReference>
<dbReference type="PROSITE" id="PS50084">
    <property type="entry name" value="KH_TYPE_1"/>
    <property type="match status" value="1"/>
</dbReference>
<feature type="chain" id="PRO_0000344928" description="Ribonuclease Y">
    <location>
        <begin position="1"/>
        <end position="535"/>
    </location>
</feature>
<feature type="transmembrane region" description="Helical" evidence="1">
    <location>
        <begin position="30"/>
        <end position="50"/>
    </location>
</feature>
<feature type="domain" description="KH" evidence="1">
    <location>
        <begin position="225"/>
        <end position="285"/>
    </location>
</feature>
<feature type="domain" description="HD" evidence="2">
    <location>
        <begin position="351"/>
        <end position="444"/>
    </location>
</feature>
<comment type="function">
    <text evidence="1">Endoribonuclease that initiates mRNA decay.</text>
</comment>
<comment type="subcellular location">
    <subcellularLocation>
        <location evidence="1">Cell membrane</location>
        <topology evidence="1">Single-pass membrane protein</topology>
    </subcellularLocation>
</comment>
<comment type="similarity">
    <text evidence="1">Belongs to the RNase Y family.</text>
</comment>
<protein>
    <recommendedName>
        <fullName evidence="1">Ribonuclease Y</fullName>
        <shortName evidence="1">RNase Y</shortName>
        <ecNumber evidence="1">3.1.-.-</ecNumber>
    </recommendedName>
</protein>
<organism>
    <name type="scientific">Roseiflexus sp. (strain RS-1)</name>
    <dbReference type="NCBI Taxonomy" id="357808"/>
    <lineage>
        <taxon>Bacteria</taxon>
        <taxon>Bacillati</taxon>
        <taxon>Chloroflexota</taxon>
        <taxon>Chloroflexia</taxon>
        <taxon>Chloroflexales</taxon>
        <taxon>Roseiflexineae</taxon>
        <taxon>Roseiflexaceae</taxon>
        <taxon>Roseiflexus</taxon>
    </lineage>
</organism>
<evidence type="ECO:0000255" key="1">
    <source>
        <dbReference type="HAMAP-Rule" id="MF_00335"/>
    </source>
</evidence>
<evidence type="ECO:0000255" key="2">
    <source>
        <dbReference type="PROSITE-ProRule" id="PRU01175"/>
    </source>
</evidence>
<reference key="1">
    <citation type="submission" date="2007-04" db="EMBL/GenBank/DDBJ databases">
        <title>Complete sequence of Roseiflexus sp. RS-1.</title>
        <authorList>
            <consortium name="US DOE Joint Genome Institute"/>
            <person name="Copeland A."/>
            <person name="Lucas S."/>
            <person name="Lapidus A."/>
            <person name="Barry K."/>
            <person name="Detter J.C."/>
            <person name="Glavina del Rio T."/>
            <person name="Hammon N."/>
            <person name="Israni S."/>
            <person name="Dalin E."/>
            <person name="Tice H."/>
            <person name="Pitluck S."/>
            <person name="Chertkov O."/>
            <person name="Brettin T."/>
            <person name="Bruce D."/>
            <person name="Han C."/>
            <person name="Schmutz J."/>
            <person name="Larimer F."/>
            <person name="Land M."/>
            <person name="Hauser L."/>
            <person name="Kyrpides N."/>
            <person name="Mikhailova N."/>
            <person name="Bryant D.A."/>
            <person name="Richardson P."/>
        </authorList>
    </citation>
    <scope>NUCLEOTIDE SEQUENCE [LARGE SCALE GENOMIC DNA]</scope>
    <source>
        <strain>RS-1</strain>
    </source>
</reference>
<accession>A5UQ59</accession>